<protein>
    <recommendedName>
        <fullName evidence="1">Cobalt-precorrin-5B C(1)-methyltransferase</fullName>
        <ecNumber evidence="1">2.1.1.195</ecNumber>
    </recommendedName>
    <alternativeName>
        <fullName evidence="1">Cobalt-precorrin-6A synthase</fullName>
    </alternativeName>
</protein>
<evidence type="ECO:0000255" key="1">
    <source>
        <dbReference type="HAMAP-Rule" id="MF_00787"/>
    </source>
</evidence>
<feature type="chain" id="PRO_1000212940" description="Cobalt-precorrin-5B C(1)-methyltransferase">
    <location>
        <begin position="1"/>
        <end position="349"/>
    </location>
</feature>
<proteinExistence type="inferred from homology"/>
<keyword id="KW-0169">Cobalamin biosynthesis</keyword>
<keyword id="KW-0489">Methyltransferase</keyword>
<keyword id="KW-0949">S-adenosyl-L-methionine</keyword>
<keyword id="KW-0808">Transferase</keyword>
<dbReference type="EC" id="2.1.1.195" evidence="1"/>
<dbReference type="EMBL" id="CP001401">
    <property type="protein sequence ID" value="ACP54140.1"/>
    <property type="molecule type" value="Genomic_DNA"/>
</dbReference>
<dbReference type="RefSeq" id="WP_012710290.1">
    <property type="nucleotide sequence ID" value="NC_012632.1"/>
</dbReference>
<dbReference type="SMR" id="C3N0H9"/>
<dbReference type="GeneID" id="84060591"/>
<dbReference type="KEGG" id="sim:M1627_0111"/>
<dbReference type="HOGENOM" id="CLU_041273_1_0_2"/>
<dbReference type="UniPathway" id="UPA00148">
    <property type="reaction ID" value="UER00227"/>
</dbReference>
<dbReference type="Proteomes" id="UP000002307">
    <property type="component" value="Chromosome"/>
</dbReference>
<dbReference type="GO" id="GO:0043780">
    <property type="term" value="F:cobalt-precorrin-5B C1-methyltransferase activity"/>
    <property type="evidence" value="ECO:0007669"/>
    <property type="project" value="RHEA"/>
</dbReference>
<dbReference type="GO" id="GO:0019251">
    <property type="term" value="P:anaerobic cobalamin biosynthetic process"/>
    <property type="evidence" value="ECO:0007669"/>
    <property type="project" value="UniProtKB-UniRule"/>
</dbReference>
<dbReference type="GO" id="GO:0032259">
    <property type="term" value="P:methylation"/>
    <property type="evidence" value="ECO:0007669"/>
    <property type="project" value="UniProtKB-KW"/>
</dbReference>
<dbReference type="Gene3D" id="3.30.2110.10">
    <property type="entry name" value="CbiD-like"/>
    <property type="match status" value="1"/>
</dbReference>
<dbReference type="Gene3D" id="3.40.50.10720">
    <property type="entry name" value="CbiD-like domains"/>
    <property type="match status" value="1"/>
</dbReference>
<dbReference type="HAMAP" id="MF_00787">
    <property type="entry name" value="CbiD"/>
    <property type="match status" value="1"/>
</dbReference>
<dbReference type="InterPro" id="IPR002748">
    <property type="entry name" value="CbiD"/>
</dbReference>
<dbReference type="InterPro" id="IPR036074">
    <property type="entry name" value="CbiD_sf"/>
</dbReference>
<dbReference type="NCBIfam" id="TIGR00312">
    <property type="entry name" value="cbiD"/>
    <property type="match status" value="1"/>
</dbReference>
<dbReference type="PANTHER" id="PTHR35863">
    <property type="entry name" value="COBALT-PRECORRIN-5B C(1)-METHYLTRANSFERASE"/>
    <property type="match status" value="1"/>
</dbReference>
<dbReference type="PANTHER" id="PTHR35863:SF1">
    <property type="entry name" value="COBALT-PRECORRIN-5B C(1)-METHYLTRANSFERASE"/>
    <property type="match status" value="1"/>
</dbReference>
<dbReference type="Pfam" id="PF01888">
    <property type="entry name" value="CbiD"/>
    <property type="match status" value="1"/>
</dbReference>
<dbReference type="PIRSF" id="PIRSF026782">
    <property type="entry name" value="CbiD"/>
    <property type="match status" value="1"/>
</dbReference>
<dbReference type="SUPFAM" id="SSF111342">
    <property type="entry name" value="CbiD-like"/>
    <property type="match status" value="1"/>
</dbReference>
<name>CBID_SACI3</name>
<reference key="1">
    <citation type="journal article" date="2009" name="Proc. Natl. Acad. Sci. U.S.A.">
        <title>Biogeography of the Sulfolobus islandicus pan-genome.</title>
        <authorList>
            <person name="Reno M.L."/>
            <person name="Held N.L."/>
            <person name="Fields C.J."/>
            <person name="Burke P.V."/>
            <person name="Whitaker R.J."/>
        </authorList>
    </citation>
    <scope>NUCLEOTIDE SEQUENCE [LARGE SCALE GENOMIC DNA]</scope>
    <source>
        <strain>M.16.27</strain>
    </source>
</reference>
<sequence length="349" mass="37432">MIINSLKRFGITTGAAASAAAKAAVIGLLNREKRNTVVIPTPIGLRLEIPVEKVEIDSGIACAEVKKFSGDNPDILDGLAIRCCAKLNESNEIVIVGGKGVGKVTRSGLKATMGETAISPTVRDMVINAIREVTDKGIQITIEVPNGDIIAENTLNKMVGIVGGISILGTTGIETPVSDDDYLEHIKCELNVIRQSYDFVVIAPGNSAAKYASKLFDSNSIIKVGDRIGDSIKLASSVFRKVILAGLPAKLLKVYAGIFNTHFSQGDARLESLTHASVLAGLPYDVLTKITNALSVEEAFTYMTKEQRRKVMKIVAEKILSRIKSFNGDINFCVIIFDYDGESLSRVGC</sequence>
<gene>
    <name evidence="1" type="primary">cbiD</name>
    <name type="ordered locus">M1627_0111</name>
</gene>
<comment type="function">
    <text evidence="1">Catalyzes the methylation of C-1 in cobalt-precorrin-5B to form cobalt-precorrin-6A.</text>
</comment>
<comment type="catalytic activity">
    <reaction evidence="1">
        <text>Co-precorrin-5B + S-adenosyl-L-methionine = Co-precorrin-6A + S-adenosyl-L-homocysteine</text>
        <dbReference type="Rhea" id="RHEA:26285"/>
        <dbReference type="ChEBI" id="CHEBI:57856"/>
        <dbReference type="ChEBI" id="CHEBI:59789"/>
        <dbReference type="ChEBI" id="CHEBI:60063"/>
        <dbReference type="ChEBI" id="CHEBI:60064"/>
        <dbReference type="EC" id="2.1.1.195"/>
    </reaction>
</comment>
<comment type="pathway">
    <text evidence="1">Cofactor biosynthesis; adenosylcobalamin biosynthesis; cob(II)yrinate a,c-diamide from sirohydrochlorin (anaerobic route): step 6/10.</text>
</comment>
<comment type="similarity">
    <text evidence="1">Belongs to the CbiD family.</text>
</comment>
<organism>
    <name type="scientific">Saccharolobus islandicus (strain M.16.27)</name>
    <name type="common">Sulfolobus islandicus</name>
    <dbReference type="NCBI Taxonomy" id="427318"/>
    <lineage>
        <taxon>Archaea</taxon>
        <taxon>Thermoproteota</taxon>
        <taxon>Thermoprotei</taxon>
        <taxon>Sulfolobales</taxon>
        <taxon>Sulfolobaceae</taxon>
        <taxon>Saccharolobus</taxon>
    </lineage>
</organism>
<accession>C3N0H9</accession>